<keyword id="KW-0963">Cytoplasm</keyword>
<keyword id="KW-0521">NADP</keyword>
<keyword id="KW-0560">Oxidoreductase</keyword>
<keyword id="KW-0671">Queuosine biosynthesis</keyword>
<keyword id="KW-1185">Reference proteome</keyword>
<proteinExistence type="inferred from homology"/>
<protein>
    <recommendedName>
        <fullName evidence="1">NADPH-dependent 7-cyano-7-deazaguanine reductase</fullName>
        <ecNumber evidence="1">1.7.1.13</ecNumber>
    </recommendedName>
    <alternativeName>
        <fullName evidence="1">7-cyano-7-carbaguanine reductase</fullName>
    </alternativeName>
    <alternativeName>
        <fullName evidence="1">NADPH-dependent nitrile oxidoreductase</fullName>
    </alternativeName>
    <alternativeName>
        <fullName evidence="1">PreQ(0) reductase</fullName>
    </alternativeName>
</protein>
<sequence>MSSYQNHKALAELTLGKPTAYCDYYDATLLQAVPRSMNREPLGLYPDNLPFHGADIWTLYELSWLNSNGLPQVAVGEISLNADSINLIESKSFKLYLNSFNQTIFADKESVRMTLQRDLAACAQGNVSVALYDLDEITGQPISNFNGECLDKQDIRIDSYEFNADYLQGAAGKDHVEESLVSHLLKSNCLITHQPDWGSVQIHYRGPQIDHEALLRYLVSFRHHNEFHEQCVERIFNDIMRFCQPETLTVYARYTRRGGLDINPWRSNTDFVPLTGRLARQ</sequence>
<organism>
    <name type="scientific">Yersinia pestis</name>
    <dbReference type="NCBI Taxonomy" id="632"/>
    <lineage>
        <taxon>Bacteria</taxon>
        <taxon>Pseudomonadati</taxon>
        <taxon>Pseudomonadota</taxon>
        <taxon>Gammaproteobacteria</taxon>
        <taxon>Enterobacterales</taxon>
        <taxon>Yersiniaceae</taxon>
        <taxon>Yersinia</taxon>
    </lineage>
</organism>
<reference key="1">
    <citation type="journal article" date="2001" name="Nature">
        <title>Genome sequence of Yersinia pestis, the causative agent of plague.</title>
        <authorList>
            <person name="Parkhill J."/>
            <person name="Wren B.W."/>
            <person name="Thomson N.R."/>
            <person name="Titball R.W."/>
            <person name="Holden M.T.G."/>
            <person name="Prentice M.B."/>
            <person name="Sebaihia M."/>
            <person name="James K.D."/>
            <person name="Churcher C.M."/>
            <person name="Mungall K.L."/>
            <person name="Baker S."/>
            <person name="Basham D."/>
            <person name="Bentley S.D."/>
            <person name="Brooks K."/>
            <person name="Cerdeno-Tarraga A.-M."/>
            <person name="Chillingworth T."/>
            <person name="Cronin A."/>
            <person name="Davies R.M."/>
            <person name="Davis P."/>
            <person name="Dougan G."/>
            <person name="Feltwell T."/>
            <person name="Hamlin N."/>
            <person name="Holroyd S."/>
            <person name="Jagels K."/>
            <person name="Karlyshev A.V."/>
            <person name="Leather S."/>
            <person name="Moule S."/>
            <person name="Oyston P.C.F."/>
            <person name="Quail M.A."/>
            <person name="Rutherford K.M."/>
            <person name="Simmonds M."/>
            <person name="Skelton J."/>
            <person name="Stevens K."/>
            <person name="Whitehead S."/>
            <person name="Barrell B.G."/>
        </authorList>
    </citation>
    <scope>NUCLEOTIDE SEQUENCE [LARGE SCALE GENOMIC DNA]</scope>
    <source>
        <strain>CO-92 / Biovar Orientalis</strain>
    </source>
</reference>
<reference key="2">
    <citation type="journal article" date="2002" name="J. Bacteriol.">
        <title>Genome sequence of Yersinia pestis KIM.</title>
        <authorList>
            <person name="Deng W."/>
            <person name="Burland V."/>
            <person name="Plunkett G. III"/>
            <person name="Boutin A."/>
            <person name="Mayhew G.F."/>
            <person name="Liss P."/>
            <person name="Perna N.T."/>
            <person name="Rose D.J."/>
            <person name="Mau B."/>
            <person name="Zhou S."/>
            <person name="Schwartz D.C."/>
            <person name="Fetherston J.D."/>
            <person name="Lindler L.E."/>
            <person name="Brubaker R.R."/>
            <person name="Plano G.V."/>
            <person name="Straley S.C."/>
            <person name="McDonough K.A."/>
            <person name="Nilles M.L."/>
            <person name="Matson J.S."/>
            <person name="Blattner F.R."/>
            <person name="Perry R.D."/>
        </authorList>
    </citation>
    <scope>NUCLEOTIDE SEQUENCE [LARGE SCALE GENOMIC DNA]</scope>
    <source>
        <strain>KIM10+ / Biovar Mediaevalis</strain>
    </source>
</reference>
<reference key="3">
    <citation type="journal article" date="2004" name="DNA Res.">
        <title>Complete genome sequence of Yersinia pestis strain 91001, an isolate avirulent to humans.</title>
        <authorList>
            <person name="Song Y."/>
            <person name="Tong Z."/>
            <person name="Wang J."/>
            <person name="Wang L."/>
            <person name="Guo Z."/>
            <person name="Han Y."/>
            <person name="Zhang J."/>
            <person name="Pei D."/>
            <person name="Zhou D."/>
            <person name="Qin H."/>
            <person name="Pang X."/>
            <person name="Han Y."/>
            <person name="Zhai J."/>
            <person name="Li M."/>
            <person name="Cui B."/>
            <person name="Qi Z."/>
            <person name="Jin L."/>
            <person name="Dai R."/>
            <person name="Chen F."/>
            <person name="Li S."/>
            <person name="Ye C."/>
            <person name="Du Z."/>
            <person name="Lin W."/>
            <person name="Wang J."/>
            <person name="Yu J."/>
            <person name="Yang H."/>
            <person name="Wang J."/>
            <person name="Huang P."/>
            <person name="Yang R."/>
        </authorList>
    </citation>
    <scope>NUCLEOTIDE SEQUENCE [LARGE SCALE GENOMIC DNA]</scope>
    <source>
        <strain>91001 / Biovar Mediaevalis</strain>
    </source>
</reference>
<gene>
    <name evidence="1" type="primary">queF</name>
    <name type="ordered locus">YPO1034</name>
    <name type="ordered locus">y3147</name>
    <name type="ordered locus">YP_2817</name>
</gene>
<evidence type="ECO:0000255" key="1">
    <source>
        <dbReference type="HAMAP-Rule" id="MF_00817"/>
    </source>
</evidence>
<feature type="chain" id="PRO_0000163073" description="NADPH-dependent 7-cyano-7-deazaguanine reductase">
    <location>
        <begin position="1"/>
        <end position="281"/>
    </location>
</feature>
<feature type="active site" description="Thioimide intermediate" evidence="1">
    <location>
        <position position="189"/>
    </location>
</feature>
<feature type="active site" description="Proton donor" evidence="1">
    <location>
        <position position="196"/>
    </location>
</feature>
<feature type="binding site" evidence="1">
    <location>
        <begin position="88"/>
        <end position="90"/>
    </location>
    <ligand>
        <name>substrate</name>
    </ligand>
</feature>
<feature type="binding site" evidence="1">
    <location>
        <begin position="90"/>
        <end position="91"/>
    </location>
    <ligand>
        <name>NADPH</name>
        <dbReference type="ChEBI" id="CHEBI:57783"/>
    </ligand>
</feature>
<feature type="binding site" evidence="1">
    <location>
        <begin position="228"/>
        <end position="229"/>
    </location>
    <ligand>
        <name>substrate</name>
    </ligand>
</feature>
<feature type="binding site" evidence="1">
    <location>
        <begin position="257"/>
        <end position="258"/>
    </location>
    <ligand>
        <name>NADPH</name>
        <dbReference type="ChEBI" id="CHEBI:57783"/>
    </ligand>
</feature>
<comment type="function">
    <text evidence="1">Catalyzes the NADPH-dependent reduction of 7-cyano-7-deazaguanine (preQ0) to 7-aminomethyl-7-deazaguanine (preQ1).</text>
</comment>
<comment type="catalytic activity">
    <reaction evidence="1">
        <text>7-aminomethyl-7-carbaguanine + 2 NADP(+) = 7-cyano-7-deazaguanine + 2 NADPH + 3 H(+)</text>
        <dbReference type="Rhea" id="RHEA:13409"/>
        <dbReference type="ChEBI" id="CHEBI:15378"/>
        <dbReference type="ChEBI" id="CHEBI:45075"/>
        <dbReference type="ChEBI" id="CHEBI:57783"/>
        <dbReference type="ChEBI" id="CHEBI:58349"/>
        <dbReference type="ChEBI" id="CHEBI:58703"/>
        <dbReference type="EC" id="1.7.1.13"/>
    </reaction>
</comment>
<comment type="pathway">
    <text evidence="1">tRNA modification; tRNA-queuosine biosynthesis.</text>
</comment>
<comment type="subunit">
    <text evidence="1">Homodimer.</text>
</comment>
<comment type="subcellular location">
    <subcellularLocation>
        <location evidence="1">Cytoplasm</location>
    </subcellularLocation>
</comment>
<comment type="similarity">
    <text evidence="1">Belongs to the GTP cyclohydrolase I family. QueF type 2 subfamily.</text>
</comment>
<dbReference type="EC" id="1.7.1.13" evidence="1"/>
<dbReference type="EMBL" id="AL590842">
    <property type="protein sequence ID" value="CAL19699.1"/>
    <property type="molecule type" value="Genomic_DNA"/>
</dbReference>
<dbReference type="EMBL" id="AE009952">
    <property type="protein sequence ID" value="AAM86697.1"/>
    <property type="molecule type" value="Genomic_DNA"/>
</dbReference>
<dbReference type="EMBL" id="AE017042">
    <property type="protein sequence ID" value="AAS63001.1"/>
    <property type="molecule type" value="Genomic_DNA"/>
</dbReference>
<dbReference type="PIR" id="AI0126">
    <property type="entry name" value="AI0126"/>
</dbReference>
<dbReference type="RefSeq" id="WP_002212122.1">
    <property type="nucleotide sequence ID" value="NZ_WUCM01000143.1"/>
</dbReference>
<dbReference type="RefSeq" id="YP_002346077.1">
    <property type="nucleotide sequence ID" value="NC_003143.1"/>
</dbReference>
<dbReference type="SMR" id="Q8ZH75"/>
<dbReference type="STRING" id="214092.YPO1034"/>
<dbReference type="PaxDb" id="214092-YPO1034"/>
<dbReference type="DNASU" id="1148094"/>
<dbReference type="EnsemblBacteria" id="AAS63001">
    <property type="protein sequence ID" value="AAS63001"/>
    <property type="gene ID" value="YP_2817"/>
</dbReference>
<dbReference type="GeneID" id="57977527"/>
<dbReference type="KEGG" id="ype:YPO1034"/>
<dbReference type="KEGG" id="ypk:y3147"/>
<dbReference type="KEGG" id="ypm:YP_2817"/>
<dbReference type="PATRIC" id="fig|214092.21.peg.1322"/>
<dbReference type="eggNOG" id="COG0780">
    <property type="taxonomic scope" value="Bacteria"/>
</dbReference>
<dbReference type="eggNOG" id="COG2904">
    <property type="taxonomic scope" value="Bacteria"/>
</dbReference>
<dbReference type="HOGENOM" id="CLU_054738_0_0_6"/>
<dbReference type="OMA" id="QCVERIY"/>
<dbReference type="OrthoDB" id="9789995at2"/>
<dbReference type="UniPathway" id="UPA00392"/>
<dbReference type="Proteomes" id="UP000000815">
    <property type="component" value="Chromosome"/>
</dbReference>
<dbReference type="Proteomes" id="UP000001019">
    <property type="component" value="Chromosome"/>
</dbReference>
<dbReference type="Proteomes" id="UP000002490">
    <property type="component" value="Chromosome"/>
</dbReference>
<dbReference type="GO" id="GO:0005829">
    <property type="term" value="C:cytosol"/>
    <property type="evidence" value="ECO:0000318"/>
    <property type="project" value="GO_Central"/>
</dbReference>
<dbReference type="GO" id="GO:0033739">
    <property type="term" value="F:preQ1 synthase activity"/>
    <property type="evidence" value="ECO:0000318"/>
    <property type="project" value="GO_Central"/>
</dbReference>
<dbReference type="GO" id="GO:0008616">
    <property type="term" value="P:queuosine biosynthetic process"/>
    <property type="evidence" value="ECO:0000318"/>
    <property type="project" value="GO_Central"/>
</dbReference>
<dbReference type="GO" id="GO:0006400">
    <property type="term" value="P:tRNA modification"/>
    <property type="evidence" value="ECO:0007669"/>
    <property type="project" value="UniProtKB-UniRule"/>
</dbReference>
<dbReference type="Gene3D" id="3.30.1130.10">
    <property type="match status" value="2"/>
</dbReference>
<dbReference type="HAMAP" id="MF_00817">
    <property type="entry name" value="QueF_type2"/>
    <property type="match status" value="1"/>
</dbReference>
<dbReference type="InterPro" id="IPR043133">
    <property type="entry name" value="GTP-CH-I_C/QueF"/>
</dbReference>
<dbReference type="InterPro" id="IPR050084">
    <property type="entry name" value="NADPH_dep_7-cyano-7-deazaG_red"/>
</dbReference>
<dbReference type="InterPro" id="IPR029500">
    <property type="entry name" value="QueF"/>
</dbReference>
<dbReference type="InterPro" id="IPR029139">
    <property type="entry name" value="QueF_N"/>
</dbReference>
<dbReference type="InterPro" id="IPR016428">
    <property type="entry name" value="QueF_type2"/>
</dbReference>
<dbReference type="NCBIfam" id="TIGR03138">
    <property type="entry name" value="QueF"/>
    <property type="match status" value="1"/>
</dbReference>
<dbReference type="PANTHER" id="PTHR34354">
    <property type="entry name" value="NADPH-DEPENDENT 7-CYANO-7-DEAZAGUANINE REDUCTASE"/>
    <property type="match status" value="1"/>
</dbReference>
<dbReference type="PANTHER" id="PTHR34354:SF1">
    <property type="entry name" value="NADPH-DEPENDENT 7-CYANO-7-DEAZAGUANINE REDUCTASE"/>
    <property type="match status" value="1"/>
</dbReference>
<dbReference type="Pfam" id="PF14489">
    <property type="entry name" value="QueF"/>
    <property type="match status" value="1"/>
</dbReference>
<dbReference type="Pfam" id="PF14819">
    <property type="entry name" value="QueF_N"/>
    <property type="match status" value="1"/>
</dbReference>
<dbReference type="PIRSF" id="PIRSF004750">
    <property type="entry name" value="Nitrile_oxidored_YqcD_prd"/>
    <property type="match status" value="1"/>
</dbReference>
<dbReference type="SUPFAM" id="SSF55620">
    <property type="entry name" value="Tetrahydrobiopterin biosynthesis enzymes-like"/>
    <property type="match status" value="1"/>
</dbReference>
<name>QUEF_YERPE</name>
<accession>Q8ZH75</accession>
<accession>Q0WI11</accession>
<accession>Q74S40</accession>
<accession>Q7CH11</accession>